<sequence length="299" mass="33097">MNSSNPLVITLLGPTASGKTALALDIAERLDLPVFNVDSRQLYREMDIGTAKPTAEQQARIPHHLLDLRTPDQPITLQEFQAIATPCINAALEQRDVALLVGGSGLYLKALTSGLQPPAVAPQPQLRQQLTALGQQICHPLLQAADPKAAAKIAPADAVRTQRALEVLYGSGQPMSRQATAAPPPWRVLELGLNPANLRQRIQQRTEQLYRDGLVDETQRLSERYGADLPLLQTIGYSEALQMIGGSLTTTEAVRITSQRTRQFAKRQRTWFRRQHNPHWLPDQATLTDAMTLIEQHLR</sequence>
<reference key="1">
    <citation type="submission" date="2005-07" db="EMBL/GenBank/DDBJ databases">
        <title>Complete sequence of Synechococcus sp. CC9605.</title>
        <authorList>
            <consortium name="US DOE Joint Genome Institute"/>
            <person name="Copeland A."/>
            <person name="Lucas S."/>
            <person name="Lapidus A."/>
            <person name="Barry K."/>
            <person name="Detter J.C."/>
            <person name="Glavina T."/>
            <person name="Hammon N."/>
            <person name="Israni S."/>
            <person name="Pitluck S."/>
            <person name="Schmutz J."/>
            <person name="Martinez M."/>
            <person name="Larimer F."/>
            <person name="Land M."/>
            <person name="Kyrpides N."/>
            <person name="Ivanova N."/>
            <person name="Richardson P."/>
        </authorList>
    </citation>
    <scope>NUCLEOTIDE SEQUENCE [LARGE SCALE GENOMIC DNA]</scope>
    <source>
        <strain>CC9605</strain>
    </source>
</reference>
<dbReference type="EC" id="2.5.1.75" evidence="1"/>
<dbReference type="EMBL" id="CP000110">
    <property type="protein sequence ID" value="ABB33865.1"/>
    <property type="molecule type" value="Genomic_DNA"/>
</dbReference>
<dbReference type="RefSeq" id="WP_011363125.1">
    <property type="nucleotide sequence ID" value="NC_007516.1"/>
</dbReference>
<dbReference type="SMR" id="Q3ANG7"/>
<dbReference type="STRING" id="110662.Syncc9605_0086"/>
<dbReference type="KEGG" id="syd:Syncc9605_0086"/>
<dbReference type="eggNOG" id="COG0324">
    <property type="taxonomic scope" value="Bacteria"/>
</dbReference>
<dbReference type="HOGENOM" id="CLU_032616_0_1_3"/>
<dbReference type="OrthoDB" id="9776390at2"/>
<dbReference type="GO" id="GO:0005524">
    <property type="term" value="F:ATP binding"/>
    <property type="evidence" value="ECO:0007669"/>
    <property type="project" value="UniProtKB-UniRule"/>
</dbReference>
<dbReference type="GO" id="GO:0052381">
    <property type="term" value="F:tRNA dimethylallyltransferase activity"/>
    <property type="evidence" value="ECO:0007669"/>
    <property type="project" value="UniProtKB-UniRule"/>
</dbReference>
<dbReference type="GO" id="GO:0006400">
    <property type="term" value="P:tRNA modification"/>
    <property type="evidence" value="ECO:0007669"/>
    <property type="project" value="TreeGrafter"/>
</dbReference>
<dbReference type="Gene3D" id="1.10.20.140">
    <property type="match status" value="1"/>
</dbReference>
<dbReference type="Gene3D" id="3.40.50.300">
    <property type="entry name" value="P-loop containing nucleotide triphosphate hydrolases"/>
    <property type="match status" value="1"/>
</dbReference>
<dbReference type="HAMAP" id="MF_00185">
    <property type="entry name" value="IPP_trans"/>
    <property type="match status" value="1"/>
</dbReference>
<dbReference type="InterPro" id="IPR039657">
    <property type="entry name" value="Dimethylallyltransferase"/>
</dbReference>
<dbReference type="InterPro" id="IPR018022">
    <property type="entry name" value="IPT"/>
</dbReference>
<dbReference type="InterPro" id="IPR027417">
    <property type="entry name" value="P-loop_NTPase"/>
</dbReference>
<dbReference type="NCBIfam" id="TIGR00174">
    <property type="entry name" value="miaA"/>
    <property type="match status" value="1"/>
</dbReference>
<dbReference type="PANTHER" id="PTHR11088">
    <property type="entry name" value="TRNA DIMETHYLALLYLTRANSFERASE"/>
    <property type="match status" value="1"/>
</dbReference>
<dbReference type="PANTHER" id="PTHR11088:SF60">
    <property type="entry name" value="TRNA DIMETHYLALLYLTRANSFERASE"/>
    <property type="match status" value="1"/>
</dbReference>
<dbReference type="Pfam" id="PF01715">
    <property type="entry name" value="IPPT"/>
    <property type="match status" value="1"/>
</dbReference>
<dbReference type="SUPFAM" id="SSF52540">
    <property type="entry name" value="P-loop containing nucleoside triphosphate hydrolases"/>
    <property type="match status" value="1"/>
</dbReference>
<proteinExistence type="inferred from homology"/>
<comment type="function">
    <text evidence="1">Catalyzes the transfer of a dimethylallyl group onto the adenine at position 37 in tRNAs that read codons beginning with uridine, leading to the formation of N6-(dimethylallyl)adenosine (i(6)A).</text>
</comment>
<comment type="catalytic activity">
    <reaction evidence="1">
        <text>adenosine(37) in tRNA + dimethylallyl diphosphate = N(6)-dimethylallyladenosine(37) in tRNA + diphosphate</text>
        <dbReference type="Rhea" id="RHEA:26482"/>
        <dbReference type="Rhea" id="RHEA-COMP:10162"/>
        <dbReference type="Rhea" id="RHEA-COMP:10375"/>
        <dbReference type="ChEBI" id="CHEBI:33019"/>
        <dbReference type="ChEBI" id="CHEBI:57623"/>
        <dbReference type="ChEBI" id="CHEBI:74411"/>
        <dbReference type="ChEBI" id="CHEBI:74415"/>
        <dbReference type="EC" id="2.5.1.75"/>
    </reaction>
</comment>
<comment type="cofactor">
    <cofactor evidence="1">
        <name>Mg(2+)</name>
        <dbReference type="ChEBI" id="CHEBI:18420"/>
    </cofactor>
</comment>
<comment type="subunit">
    <text evidence="1">Monomer.</text>
</comment>
<comment type="similarity">
    <text evidence="1">Belongs to the IPP transferase family.</text>
</comment>
<organism>
    <name type="scientific">Synechococcus sp. (strain CC9605)</name>
    <dbReference type="NCBI Taxonomy" id="110662"/>
    <lineage>
        <taxon>Bacteria</taxon>
        <taxon>Bacillati</taxon>
        <taxon>Cyanobacteriota</taxon>
        <taxon>Cyanophyceae</taxon>
        <taxon>Synechococcales</taxon>
        <taxon>Synechococcaceae</taxon>
        <taxon>Synechococcus</taxon>
    </lineage>
</organism>
<name>MIAA_SYNSC</name>
<evidence type="ECO:0000255" key="1">
    <source>
        <dbReference type="HAMAP-Rule" id="MF_00185"/>
    </source>
</evidence>
<gene>
    <name evidence="1" type="primary">miaA</name>
    <name type="ordered locus">Syncc9605_0086</name>
</gene>
<feature type="chain" id="PRO_1000020678" description="tRNA dimethylallyltransferase">
    <location>
        <begin position="1"/>
        <end position="299"/>
    </location>
</feature>
<feature type="region of interest" description="Interaction with substrate tRNA" evidence="1">
    <location>
        <begin position="38"/>
        <end position="41"/>
    </location>
</feature>
<feature type="binding site" evidence="1">
    <location>
        <begin position="13"/>
        <end position="20"/>
    </location>
    <ligand>
        <name>ATP</name>
        <dbReference type="ChEBI" id="CHEBI:30616"/>
    </ligand>
</feature>
<feature type="binding site" evidence="1">
    <location>
        <begin position="15"/>
        <end position="20"/>
    </location>
    <ligand>
        <name>substrate</name>
    </ligand>
</feature>
<feature type="site" description="Interaction with substrate tRNA" evidence="1">
    <location>
        <position position="104"/>
    </location>
</feature>
<protein>
    <recommendedName>
        <fullName evidence="1">tRNA dimethylallyltransferase</fullName>
        <ecNumber evidence="1">2.5.1.75</ecNumber>
    </recommendedName>
    <alternativeName>
        <fullName evidence="1">Dimethylallyl diphosphate:tRNA dimethylallyltransferase</fullName>
        <shortName evidence="1">DMAPP:tRNA dimethylallyltransferase</shortName>
        <shortName evidence="1">DMATase</shortName>
    </alternativeName>
    <alternativeName>
        <fullName evidence="1">Isopentenyl-diphosphate:tRNA isopentenyltransferase</fullName>
        <shortName evidence="1">IPP transferase</shortName>
        <shortName evidence="1">IPPT</shortName>
        <shortName evidence="1">IPTase</shortName>
    </alternativeName>
</protein>
<keyword id="KW-0067">ATP-binding</keyword>
<keyword id="KW-0460">Magnesium</keyword>
<keyword id="KW-0547">Nucleotide-binding</keyword>
<keyword id="KW-0808">Transferase</keyword>
<keyword id="KW-0819">tRNA processing</keyword>
<accession>Q3ANG7</accession>